<gene>
    <name type="primary">rbm42</name>
</gene>
<feature type="chain" id="PRO_0000307755" description="RNA-binding protein 42">
    <location>
        <begin position="1"/>
        <end position="392"/>
    </location>
</feature>
<feature type="domain" description="RRM" evidence="2">
    <location>
        <begin position="293"/>
        <end position="371"/>
    </location>
</feature>
<feature type="region of interest" description="Disordered" evidence="3">
    <location>
        <begin position="372"/>
        <end position="392"/>
    </location>
</feature>
<feature type="compositionally biased region" description="Basic residues" evidence="3">
    <location>
        <begin position="381"/>
        <end position="392"/>
    </location>
</feature>
<dbReference type="EMBL" id="BC080336">
    <property type="protein sequence ID" value="AAH80336.1"/>
    <property type="molecule type" value="mRNA"/>
</dbReference>
<dbReference type="RefSeq" id="NP_001007900.1">
    <property type="nucleotide sequence ID" value="NM_001007899.1"/>
</dbReference>
<dbReference type="SMR" id="Q66KL9"/>
<dbReference type="FunCoup" id="Q66KL9">
    <property type="interactions" value="2615"/>
</dbReference>
<dbReference type="STRING" id="8364.ENSXETP00000026481"/>
<dbReference type="PaxDb" id="8364-ENSXETP00000038206"/>
<dbReference type="DNASU" id="493283"/>
<dbReference type="GeneID" id="493283"/>
<dbReference type="KEGG" id="xtr:493283"/>
<dbReference type="AGR" id="Xenbase:XB-GENE-5896695"/>
<dbReference type="CTD" id="79171"/>
<dbReference type="Xenbase" id="XB-GENE-5896695">
    <property type="gene designation" value="rbm42"/>
</dbReference>
<dbReference type="eggNOG" id="KOG0226">
    <property type="taxonomic scope" value="Eukaryota"/>
</dbReference>
<dbReference type="HOGENOM" id="CLU_036197_0_0_1"/>
<dbReference type="InParanoid" id="Q66KL9"/>
<dbReference type="OrthoDB" id="1749473at2759"/>
<dbReference type="Proteomes" id="UP000008143">
    <property type="component" value="Chromosome 7"/>
</dbReference>
<dbReference type="Bgee" id="ENSXETG00000017599">
    <property type="expression patterns" value="Expressed in 2-cell stage embryo and 14 other cell types or tissues"/>
</dbReference>
<dbReference type="ExpressionAtlas" id="Q66KL9">
    <property type="expression patterns" value="baseline"/>
</dbReference>
<dbReference type="GO" id="GO:0005737">
    <property type="term" value="C:cytoplasm"/>
    <property type="evidence" value="ECO:0007669"/>
    <property type="project" value="UniProtKB-SubCell"/>
</dbReference>
<dbReference type="GO" id="GO:0005634">
    <property type="term" value="C:nucleus"/>
    <property type="evidence" value="ECO:0007669"/>
    <property type="project" value="UniProtKB-SubCell"/>
</dbReference>
<dbReference type="GO" id="GO:0003729">
    <property type="term" value="F:mRNA binding"/>
    <property type="evidence" value="ECO:0007669"/>
    <property type="project" value="InterPro"/>
</dbReference>
<dbReference type="CDD" id="cd12383">
    <property type="entry name" value="RRM_RBM42"/>
    <property type="match status" value="1"/>
</dbReference>
<dbReference type="FunFam" id="3.30.70.330:FF:000189">
    <property type="entry name" value="RNA-binding protein 42 isoform X2"/>
    <property type="match status" value="1"/>
</dbReference>
<dbReference type="Gene3D" id="3.30.70.330">
    <property type="match status" value="1"/>
</dbReference>
<dbReference type="InterPro" id="IPR012677">
    <property type="entry name" value="Nucleotide-bd_a/b_plait_sf"/>
</dbReference>
<dbReference type="InterPro" id="IPR035979">
    <property type="entry name" value="RBD_domain_sf"/>
</dbReference>
<dbReference type="InterPro" id="IPR050825">
    <property type="entry name" value="RBM42_RBP45_47-like"/>
</dbReference>
<dbReference type="InterPro" id="IPR034215">
    <property type="entry name" value="RBM42_RRM"/>
</dbReference>
<dbReference type="InterPro" id="IPR000504">
    <property type="entry name" value="RRM_dom"/>
</dbReference>
<dbReference type="PANTHER" id="PTHR47640:SF11">
    <property type="entry name" value="RNA-BINDING PROTEIN 42"/>
    <property type="match status" value="1"/>
</dbReference>
<dbReference type="PANTHER" id="PTHR47640">
    <property type="entry name" value="TRNA SELENOCYSTEINE 1-ASSOCIATED PROTEIN 1-RELATED-RELATED"/>
    <property type="match status" value="1"/>
</dbReference>
<dbReference type="Pfam" id="PF00076">
    <property type="entry name" value="RRM_1"/>
    <property type="match status" value="1"/>
</dbReference>
<dbReference type="SMART" id="SM00360">
    <property type="entry name" value="RRM"/>
    <property type="match status" value="1"/>
</dbReference>
<dbReference type="SUPFAM" id="SSF54928">
    <property type="entry name" value="RNA-binding domain, RBD"/>
    <property type="match status" value="1"/>
</dbReference>
<dbReference type="PROSITE" id="PS50102">
    <property type="entry name" value="RRM"/>
    <property type="match status" value="1"/>
</dbReference>
<proteinExistence type="evidence at transcript level"/>
<protein>
    <recommendedName>
        <fullName>RNA-binding protein 42</fullName>
    </recommendedName>
    <alternativeName>
        <fullName>RNA-binding motif protein 42</fullName>
    </alternativeName>
</protein>
<sequence length="392" mass="43243">MAGKSGEEKMKAMEAEMALFEQEVLGAPVALPPVDPVPLPIPAVPVIRAIIATNTYSQVQQSLEARAAAAASVVGPMIVPPVPFVGPAIPPPRPPVMRPSFIPHALQRPAEPHGAMPRPSFIPHVLQQRAVGPRHPGMPPPQPLMAHHMHGPPPPLMRHIPPPPLGMRAGPPPAPVGPLPPPPRPVVPSAPKMNPTVIQAAPTVYTAPPVRKPEEEIVEPPILPDEKETLSFEEAVIGPSMPEMEPVQPEVVLEPVQEDKKKTKPEKLKRCIRTAAGTSWEDQSLLEWESDDFRIFCGDLGNEVNDDILARAFSRYPSFLRAKVIRDKRTGKTKGYGFVSFKDPNDYVRAMREMNGKYVGSRPIKLRKSQWKDRNMDVVRKKQREKKKLGLR</sequence>
<evidence type="ECO:0000250" key="1"/>
<evidence type="ECO:0000255" key="2">
    <source>
        <dbReference type="PROSITE-ProRule" id="PRU00176"/>
    </source>
</evidence>
<evidence type="ECO:0000256" key="3">
    <source>
        <dbReference type="SAM" id="MobiDB-lite"/>
    </source>
</evidence>
<evidence type="ECO:0000305" key="4"/>
<organism>
    <name type="scientific">Xenopus tropicalis</name>
    <name type="common">Western clawed frog</name>
    <name type="synonym">Silurana tropicalis</name>
    <dbReference type="NCBI Taxonomy" id="8364"/>
    <lineage>
        <taxon>Eukaryota</taxon>
        <taxon>Metazoa</taxon>
        <taxon>Chordata</taxon>
        <taxon>Craniata</taxon>
        <taxon>Vertebrata</taxon>
        <taxon>Euteleostomi</taxon>
        <taxon>Amphibia</taxon>
        <taxon>Batrachia</taxon>
        <taxon>Anura</taxon>
        <taxon>Pipoidea</taxon>
        <taxon>Pipidae</taxon>
        <taxon>Xenopodinae</taxon>
        <taxon>Xenopus</taxon>
        <taxon>Silurana</taxon>
    </lineage>
</organism>
<comment type="function">
    <text evidence="1">May bind RNA.</text>
</comment>
<comment type="subcellular location">
    <subcellularLocation>
        <location evidence="1">Nucleus</location>
    </subcellularLocation>
    <subcellularLocation>
        <location evidence="1">Cytoplasm</location>
    </subcellularLocation>
</comment>
<comment type="similarity">
    <text evidence="4">Belongs to the RRM RBM42 family.</text>
</comment>
<keyword id="KW-0963">Cytoplasm</keyword>
<keyword id="KW-0539">Nucleus</keyword>
<keyword id="KW-1185">Reference proteome</keyword>
<keyword id="KW-0694">RNA-binding</keyword>
<reference key="1">
    <citation type="submission" date="2004-08" db="EMBL/GenBank/DDBJ databases">
        <authorList>
            <consortium name="NIH - Xenopus Gene Collection (XGC) project"/>
        </authorList>
    </citation>
    <scope>NUCLEOTIDE SEQUENCE [LARGE SCALE MRNA]</scope>
    <source>
        <tissue>Embryo</tissue>
    </source>
</reference>
<accession>Q66KL9</accession>
<name>RBM42_XENTR</name>